<keyword id="KW-0067">ATP-binding</keyword>
<keyword id="KW-0963">Cytoplasm</keyword>
<keyword id="KW-0418">Kinase</keyword>
<keyword id="KW-0479">Metal-binding</keyword>
<keyword id="KW-0545">Nucleotide biosynthesis</keyword>
<keyword id="KW-0547">Nucleotide-binding</keyword>
<keyword id="KW-1185">Reference proteome</keyword>
<keyword id="KW-0808">Transferase</keyword>
<keyword id="KW-0862">Zinc</keyword>
<evidence type="ECO:0000255" key="1">
    <source>
        <dbReference type="HAMAP-Rule" id="MF_00235"/>
    </source>
</evidence>
<comment type="function">
    <text evidence="1">Catalyzes the reversible transfer of the terminal phosphate group between ATP and AMP. Plays an important role in cellular energy homeostasis and in adenine nucleotide metabolism.</text>
</comment>
<comment type="catalytic activity">
    <reaction evidence="1">
        <text>AMP + ATP = 2 ADP</text>
        <dbReference type="Rhea" id="RHEA:12973"/>
        <dbReference type="ChEBI" id="CHEBI:30616"/>
        <dbReference type="ChEBI" id="CHEBI:456215"/>
        <dbReference type="ChEBI" id="CHEBI:456216"/>
        <dbReference type="EC" id="2.7.4.3"/>
    </reaction>
</comment>
<comment type="pathway">
    <text evidence="1">Purine metabolism; AMP biosynthesis via salvage pathway; AMP from ADP: step 1/1.</text>
</comment>
<comment type="subunit">
    <text evidence="1">Monomer.</text>
</comment>
<comment type="subcellular location">
    <subcellularLocation>
        <location evidence="1">Cytoplasm</location>
    </subcellularLocation>
</comment>
<comment type="domain">
    <text evidence="1">Consists of three domains, a large central CORE domain and two small peripheral domains, NMPbind and LID, which undergo movements during catalysis. The LID domain closes over the site of phosphoryl transfer upon ATP binding. Assembling and dissambling the active center during each catalytic cycle provides an effective means to prevent ATP hydrolysis. Some bacteria have evolved a zinc-coordinating structure that stabilizes the LID domain.</text>
</comment>
<comment type="similarity">
    <text evidence="1">Belongs to the adenylate kinase family.</text>
</comment>
<proteinExistence type="inferred from homology"/>
<organism>
    <name type="scientific">Mycoplasma genitalium (strain ATCC 33530 / DSM 19775 / NCTC 10195 / G37)</name>
    <name type="common">Mycoplasmoides genitalium</name>
    <dbReference type="NCBI Taxonomy" id="243273"/>
    <lineage>
        <taxon>Bacteria</taxon>
        <taxon>Bacillati</taxon>
        <taxon>Mycoplasmatota</taxon>
        <taxon>Mycoplasmoidales</taxon>
        <taxon>Mycoplasmoidaceae</taxon>
        <taxon>Mycoplasmoides</taxon>
    </lineage>
</organism>
<feature type="chain" id="PRO_0000158797" description="Adenylate kinase">
    <location>
        <begin position="1"/>
        <end position="214"/>
    </location>
</feature>
<feature type="region of interest" description="NMP" evidence="1">
    <location>
        <begin position="35"/>
        <end position="64"/>
    </location>
</feature>
<feature type="region of interest" description="LID" evidence="1">
    <location>
        <begin position="127"/>
        <end position="164"/>
    </location>
</feature>
<feature type="binding site" evidence="1">
    <location>
        <begin position="15"/>
        <end position="20"/>
    </location>
    <ligand>
        <name>ATP</name>
        <dbReference type="ChEBI" id="CHEBI:30616"/>
    </ligand>
</feature>
<feature type="binding site" evidence="1">
    <location>
        <position position="36"/>
    </location>
    <ligand>
        <name>AMP</name>
        <dbReference type="ChEBI" id="CHEBI:456215"/>
    </ligand>
</feature>
<feature type="binding site" evidence="1">
    <location>
        <position position="41"/>
    </location>
    <ligand>
        <name>AMP</name>
        <dbReference type="ChEBI" id="CHEBI:456215"/>
    </ligand>
</feature>
<feature type="binding site" evidence="1">
    <location>
        <begin position="62"/>
        <end position="64"/>
    </location>
    <ligand>
        <name>AMP</name>
        <dbReference type="ChEBI" id="CHEBI:456215"/>
    </ligand>
</feature>
<feature type="binding site" evidence="1">
    <location>
        <begin position="90"/>
        <end position="93"/>
    </location>
    <ligand>
        <name>AMP</name>
        <dbReference type="ChEBI" id="CHEBI:456215"/>
    </ligand>
</feature>
<feature type="binding site" evidence="1">
    <location>
        <position position="97"/>
    </location>
    <ligand>
        <name>AMP</name>
        <dbReference type="ChEBI" id="CHEBI:456215"/>
    </ligand>
</feature>
<feature type="binding site" evidence="1">
    <location>
        <position position="128"/>
    </location>
    <ligand>
        <name>ATP</name>
        <dbReference type="ChEBI" id="CHEBI:30616"/>
    </ligand>
</feature>
<feature type="binding site" evidence="1">
    <location>
        <position position="131"/>
    </location>
    <ligand>
        <name>Zn(2+)</name>
        <dbReference type="ChEBI" id="CHEBI:29105"/>
        <note>structural</note>
    </ligand>
</feature>
<feature type="binding site" evidence="1">
    <location>
        <position position="134"/>
    </location>
    <ligand>
        <name>Zn(2+)</name>
        <dbReference type="ChEBI" id="CHEBI:29105"/>
        <note>structural</note>
    </ligand>
</feature>
<feature type="binding site" evidence="1">
    <location>
        <begin position="137"/>
        <end position="138"/>
    </location>
    <ligand>
        <name>ATP</name>
        <dbReference type="ChEBI" id="CHEBI:30616"/>
    </ligand>
</feature>
<feature type="binding site" evidence="1">
    <location>
        <position position="151"/>
    </location>
    <ligand>
        <name>Zn(2+)</name>
        <dbReference type="ChEBI" id="CHEBI:29105"/>
        <note>structural</note>
    </ligand>
</feature>
<feature type="binding site" evidence="1">
    <location>
        <position position="154"/>
    </location>
    <ligand>
        <name>Zn(2+)</name>
        <dbReference type="ChEBI" id="CHEBI:29105"/>
        <note>structural</note>
    </ligand>
</feature>
<feature type="binding site" evidence="1">
    <location>
        <position position="161"/>
    </location>
    <ligand>
        <name>AMP</name>
        <dbReference type="ChEBI" id="CHEBI:456215"/>
    </ligand>
</feature>
<feature type="binding site" evidence="1">
    <location>
        <position position="172"/>
    </location>
    <ligand>
        <name>AMP</name>
        <dbReference type="ChEBI" id="CHEBI:456215"/>
    </ligand>
</feature>
<feature type="binding site" evidence="1">
    <location>
        <position position="200"/>
    </location>
    <ligand>
        <name>ATP</name>
        <dbReference type="ChEBI" id="CHEBI:30616"/>
    </ligand>
</feature>
<reference key="1">
    <citation type="journal article" date="1995" name="Science">
        <title>The minimal gene complement of Mycoplasma genitalium.</title>
        <authorList>
            <person name="Fraser C.M."/>
            <person name="Gocayne J.D."/>
            <person name="White O."/>
            <person name="Adams M.D."/>
            <person name="Clayton R.A."/>
            <person name="Fleischmann R.D."/>
            <person name="Bult C.J."/>
            <person name="Kerlavage A.R."/>
            <person name="Sutton G.G."/>
            <person name="Kelley J.M."/>
            <person name="Fritchman J.L."/>
            <person name="Weidman J.F."/>
            <person name="Small K.V."/>
            <person name="Sandusky M."/>
            <person name="Fuhrmann J.L."/>
            <person name="Nguyen D.T."/>
            <person name="Utterback T.R."/>
            <person name="Saudek D.M."/>
            <person name="Phillips C.A."/>
            <person name="Merrick J.M."/>
            <person name="Tomb J.-F."/>
            <person name="Dougherty B.A."/>
            <person name="Bott K.F."/>
            <person name="Hu P.-C."/>
            <person name="Lucier T.S."/>
            <person name="Peterson S.N."/>
            <person name="Smith H.O."/>
            <person name="Hutchison C.A. III"/>
            <person name="Venter J.C."/>
        </authorList>
    </citation>
    <scope>NUCLEOTIDE SEQUENCE [LARGE SCALE GENOMIC DNA]</scope>
    <source>
        <strain>ATCC 33530 / DSM 19775 / NCTC 10195 / G37</strain>
    </source>
</reference>
<sequence length="214" mass="24249">MVAQFNKFIILGPPGAGKGTVCKLLSKTTKLVHIASGDLFREAIKNQSVIGRKIAAIISQGGYVDDATTNQLVYEYITTNPLPNGFILDGYPRTENQLDFLNIKLTIDMVFELVVSDLNKLITRIDNRVICNNCNSVYNLLFQKPLVENSCDQCSAKLVKRSDDNKAVVKARMELYQQTIQPIHTYFFNKQLLVQIDCFLPLEEQLKTIKQFIR</sequence>
<gene>
    <name evidence="1" type="primary">adk</name>
    <name type="ordered locus">MG171</name>
</gene>
<dbReference type="EC" id="2.7.4.3" evidence="1"/>
<dbReference type="EMBL" id="L43967">
    <property type="protein sequence ID" value="AAC71389.1"/>
    <property type="molecule type" value="Genomic_DNA"/>
</dbReference>
<dbReference type="PIR" id="I64218">
    <property type="entry name" value="I64218"/>
</dbReference>
<dbReference type="RefSeq" id="WP_009885856.1">
    <property type="nucleotide sequence ID" value="NC_000908.2"/>
</dbReference>
<dbReference type="SMR" id="P47417"/>
<dbReference type="FunCoup" id="P47417">
    <property type="interactions" value="203"/>
</dbReference>
<dbReference type="STRING" id="243273.MG_171"/>
<dbReference type="GeneID" id="88282304"/>
<dbReference type="KEGG" id="mge:MG_171"/>
<dbReference type="eggNOG" id="COG0563">
    <property type="taxonomic scope" value="Bacteria"/>
</dbReference>
<dbReference type="HOGENOM" id="CLU_032354_1_2_14"/>
<dbReference type="InParanoid" id="P47417"/>
<dbReference type="OrthoDB" id="9805030at2"/>
<dbReference type="BioCyc" id="MGEN243273:G1GJ2-195-MONOMER"/>
<dbReference type="UniPathway" id="UPA00588">
    <property type="reaction ID" value="UER00649"/>
</dbReference>
<dbReference type="Proteomes" id="UP000000807">
    <property type="component" value="Chromosome"/>
</dbReference>
<dbReference type="GO" id="GO:0005737">
    <property type="term" value="C:cytoplasm"/>
    <property type="evidence" value="ECO:0007669"/>
    <property type="project" value="UniProtKB-SubCell"/>
</dbReference>
<dbReference type="GO" id="GO:0004017">
    <property type="term" value="F:adenylate kinase activity"/>
    <property type="evidence" value="ECO:0007669"/>
    <property type="project" value="UniProtKB-UniRule"/>
</dbReference>
<dbReference type="GO" id="GO:0005524">
    <property type="term" value="F:ATP binding"/>
    <property type="evidence" value="ECO:0007669"/>
    <property type="project" value="UniProtKB-UniRule"/>
</dbReference>
<dbReference type="GO" id="GO:0008270">
    <property type="term" value="F:zinc ion binding"/>
    <property type="evidence" value="ECO:0007669"/>
    <property type="project" value="UniProtKB-UniRule"/>
</dbReference>
<dbReference type="GO" id="GO:0044209">
    <property type="term" value="P:AMP salvage"/>
    <property type="evidence" value="ECO:0007669"/>
    <property type="project" value="UniProtKB-UniRule"/>
</dbReference>
<dbReference type="CDD" id="cd01428">
    <property type="entry name" value="ADK"/>
    <property type="match status" value="1"/>
</dbReference>
<dbReference type="Gene3D" id="3.40.50.300">
    <property type="entry name" value="P-loop containing nucleotide triphosphate hydrolases"/>
    <property type="match status" value="1"/>
</dbReference>
<dbReference type="HAMAP" id="MF_00235">
    <property type="entry name" value="Adenylate_kinase_Adk"/>
    <property type="match status" value="1"/>
</dbReference>
<dbReference type="InterPro" id="IPR006259">
    <property type="entry name" value="Adenyl_kin_sub"/>
</dbReference>
<dbReference type="InterPro" id="IPR000850">
    <property type="entry name" value="Adenylat/UMP-CMP_kin"/>
</dbReference>
<dbReference type="InterPro" id="IPR033690">
    <property type="entry name" value="Adenylat_kinase_CS"/>
</dbReference>
<dbReference type="InterPro" id="IPR007862">
    <property type="entry name" value="Adenylate_kinase_lid-dom"/>
</dbReference>
<dbReference type="InterPro" id="IPR036193">
    <property type="entry name" value="ADK_active_lid_dom_sf"/>
</dbReference>
<dbReference type="InterPro" id="IPR027417">
    <property type="entry name" value="P-loop_NTPase"/>
</dbReference>
<dbReference type="NCBIfam" id="TIGR01351">
    <property type="entry name" value="adk"/>
    <property type="match status" value="1"/>
</dbReference>
<dbReference type="PANTHER" id="PTHR23359">
    <property type="entry name" value="NUCLEOTIDE KINASE"/>
    <property type="match status" value="1"/>
</dbReference>
<dbReference type="Pfam" id="PF00406">
    <property type="entry name" value="ADK"/>
    <property type="match status" value="1"/>
</dbReference>
<dbReference type="Pfam" id="PF05191">
    <property type="entry name" value="ADK_lid"/>
    <property type="match status" value="1"/>
</dbReference>
<dbReference type="PRINTS" id="PR00094">
    <property type="entry name" value="ADENYLTKNASE"/>
</dbReference>
<dbReference type="SUPFAM" id="SSF57774">
    <property type="entry name" value="Microbial and mitochondrial ADK, insert 'zinc finger' domain"/>
    <property type="match status" value="1"/>
</dbReference>
<dbReference type="SUPFAM" id="SSF52540">
    <property type="entry name" value="P-loop containing nucleoside triphosphate hydrolases"/>
    <property type="match status" value="1"/>
</dbReference>
<dbReference type="PROSITE" id="PS00113">
    <property type="entry name" value="ADENYLATE_KINASE"/>
    <property type="match status" value="1"/>
</dbReference>
<accession>P47417</accession>
<protein>
    <recommendedName>
        <fullName evidence="1">Adenylate kinase</fullName>
        <shortName evidence="1">AK</shortName>
        <ecNumber evidence="1">2.7.4.3</ecNumber>
    </recommendedName>
    <alternativeName>
        <fullName evidence="1">ATP-AMP transphosphorylase</fullName>
    </alternativeName>
    <alternativeName>
        <fullName evidence="1">ATP:AMP phosphotransferase</fullName>
    </alternativeName>
    <alternativeName>
        <fullName evidence="1">Adenylate monophosphate kinase</fullName>
    </alternativeName>
</protein>
<name>KAD_MYCGE</name>